<proteinExistence type="inferred from homology"/>
<keyword id="KW-1185">Reference proteome</keyword>
<keyword id="KW-0678">Repressor</keyword>
<keyword id="KW-0346">Stress response</keyword>
<keyword id="KW-0804">Transcription</keyword>
<keyword id="KW-0805">Transcription regulation</keyword>
<name>HRCA_MESFL</name>
<feature type="chain" id="PRO_0000182498" description="Heat-inducible transcription repressor HrcA">
    <location>
        <begin position="1"/>
        <end position="342"/>
    </location>
</feature>
<protein>
    <recommendedName>
        <fullName evidence="1">Heat-inducible transcription repressor HrcA</fullName>
    </recommendedName>
</protein>
<accession>Q6F147</accession>
<evidence type="ECO:0000255" key="1">
    <source>
        <dbReference type="HAMAP-Rule" id="MF_00081"/>
    </source>
</evidence>
<dbReference type="EMBL" id="AE017263">
    <property type="protein sequence ID" value="AAT75776.1"/>
    <property type="molecule type" value="Genomic_DNA"/>
</dbReference>
<dbReference type="RefSeq" id="WP_011183316.1">
    <property type="nucleotide sequence ID" value="NC_006055.1"/>
</dbReference>
<dbReference type="RefSeq" id="YP_053660.1">
    <property type="nucleotide sequence ID" value="NC_006055.1"/>
</dbReference>
<dbReference type="SMR" id="Q6F147"/>
<dbReference type="STRING" id="265311.Mfl417"/>
<dbReference type="PaxDb" id="265311-Mfl417"/>
<dbReference type="EnsemblBacteria" id="AAT75776">
    <property type="protein sequence ID" value="AAT75776"/>
    <property type="gene ID" value="Mfl417"/>
</dbReference>
<dbReference type="GeneID" id="2898205"/>
<dbReference type="KEGG" id="mfl:Mfl417"/>
<dbReference type="PATRIC" id="fig|265311.5.peg.418"/>
<dbReference type="eggNOG" id="COG1420">
    <property type="taxonomic scope" value="Bacteria"/>
</dbReference>
<dbReference type="HOGENOM" id="CLU_050019_1_0_14"/>
<dbReference type="OrthoDB" id="9783139at2"/>
<dbReference type="Proteomes" id="UP000006647">
    <property type="component" value="Chromosome"/>
</dbReference>
<dbReference type="GO" id="GO:0003677">
    <property type="term" value="F:DNA binding"/>
    <property type="evidence" value="ECO:0007669"/>
    <property type="project" value="InterPro"/>
</dbReference>
<dbReference type="GO" id="GO:0045892">
    <property type="term" value="P:negative regulation of DNA-templated transcription"/>
    <property type="evidence" value="ECO:0007669"/>
    <property type="project" value="UniProtKB-UniRule"/>
</dbReference>
<dbReference type="Gene3D" id="3.30.450.40">
    <property type="match status" value="1"/>
</dbReference>
<dbReference type="Gene3D" id="3.30.390.60">
    <property type="entry name" value="Heat-inducible transcription repressor hrca homolog, domain 3"/>
    <property type="match status" value="1"/>
</dbReference>
<dbReference type="Gene3D" id="1.10.10.10">
    <property type="entry name" value="Winged helix-like DNA-binding domain superfamily/Winged helix DNA-binding domain"/>
    <property type="match status" value="1"/>
</dbReference>
<dbReference type="HAMAP" id="MF_00081">
    <property type="entry name" value="HrcA"/>
    <property type="match status" value="1"/>
</dbReference>
<dbReference type="InterPro" id="IPR029016">
    <property type="entry name" value="GAF-like_dom_sf"/>
</dbReference>
<dbReference type="InterPro" id="IPR002571">
    <property type="entry name" value="HrcA"/>
</dbReference>
<dbReference type="InterPro" id="IPR021153">
    <property type="entry name" value="HrcA_C"/>
</dbReference>
<dbReference type="InterPro" id="IPR036388">
    <property type="entry name" value="WH-like_DNA-bd_sf"/>
</dbReference>
<dbReference type="InterPro" id="IPR036390">
    <property type="entry name" value="WH_DNA-bd_sf"/>
</dbReference>
<dbReference type="InterPro" id="IPR005104">
    <property type="entry name" value="WHTH_HrcA_DNA-bd"/>
</dbReference>
<dbReference type="InterPro" id="IPR023120">
    <property type="entry name" value="WHTH_transcript_rep_HrcA_IDD"/>
</dbReference>
<dbReference type="NCBIfam" id="TIGR00331">
    <property type="entry name" value="hrcA"/>
    <property type="match status" value="1"/>
</dbReference>
<dbReference type="PANTHER" id="PTHR34824">
    <property type="entry name" value="HEAT-INDUCIBLE TRANSCRIPTION REPRESSOR HRCA"/>
    <property type="match status" value="1"/>
</dbReference>
<dbReference type="PANTHER" id="PTHR34824:SF1">
    <property type="entry name" value="HEAT-INDUCIBLE TRANSCRIPTION REPRESSOR HRCA"/>
    <property type="match status" value="1"/>
</dbReference>
<dbReference type="Pfam" id="PF01628">
    <property type="entry name" value="HrcA"/>
    <property type="match status" value="1"/>
</dbReference>
<dbReference type="Pfam" id="PF03444">
    <property type="entry name" value="HrcA_DNA-bdg"/>
    <property type="match status" value="1"/>
</dbReference>
<dbReference type="PIRSF" id="PIRSF005485">
    <property type="entry name" value="HrcA"/>
    <property type="match status" value="1"/>
</dbReference>
<dbReference type="SUPFAM" id="SSF55781">
    <property type="entry name" value="GAF domain-like"/>
    <property type="match status" value="1"/>
</dbReference>
<dbReference type="SUPFAM" id="SSF46785">
    <property type="entry name" value="Winged helix' DNA-binding domain"/>
    <property type="match status" value="1"/>
</dbReference>
<organism>
    <name type="scientific">Mesoplasma florum (strain ATCC 33453 / NBRC 100688 / NCTC 11704 / L1)</name>
    <name type="common">Acholeplasma florum</name>
    <dbReference type="NCBI Taxonomy" id="265311"/>
    <lineage>
        <taxon>Bacteria</taxon>
        <taxon>Bacillati</taxon>
        <taxon>Mycoplasmatota</taxon>
        <taxon>Mollicutes</taxon>
        <taxon>Entomoplasmatales</taxon>
        <taxon>Entomoplasmataceae</taxon>
        <taxon>Mesoplasma</taxon>
    </lineage>
</organism>
<comment type="function">
    <text evidence="1">Negative regulator of class I heat shock genes (grpE-dnaK-dnaJ and groELS operons). Prevents heat-shock induction of these operons.</text>
</comment>
<comment type="similarity">
    <text evidence="1">Belongs to the HrcA family.</text>
</comment>
<reference key="1">
    <citation type="submission" date="2004-06" db="EMBL/GenBank/DDBJ databases">
        <authorList>
            <person name="Birren B.W."/>
            <person name="Stange-Thomann N."/>
            <person name="Hafez N."/>
            <person name="DeCaprio D."/>
            <person name="Fisher S."/>
            <person name="Butler J."/>
            <person name="Elkins T."/>
            <person name="Kodira C.D."/>
            <person name="Major J."/>
            <person name="Wang S."/>
            <person name="Nicol R."/>
            <person name="Nusbaum C."/>
        </authorList>
    </citation>
    <scope>NUCLEOTIDE SEQUENCE [LARGE SCALE GENOMIC DNA]</scope>
    <source>
        <strain>ATCC 33453 / NBRC 100688 / NCTC 11704 / L1</strain>
    </source>
</reference>
<gene>
    <name evidence="1" type="primary">hrcA</name>
    <name type="ordered locus">Mfl417</name>
</gene>
<sequence length="342" mass="38985">MLSERQAKILKVIVSEYIKTNQAVSSKRIQELLNIKVSSATIRNDSAALEEMNFLEKQHTSSGRVPSTKGYRYYVDHLMEFDDYNESLKENLKSILFQRGTKIENVLEQASQIISEMTKMTAIVTKQNLNSELMVKKIDLIPLSETMASVIFILSNGEMQNQLFNLKDISLSDLSISIKIFSDCLVDTPVKEIENNISLIRPNLETTVKNYDLILETFMSNILQTKESKKEIVGMKNMLENPEFNDTDKLRKVINIMENMSPFDWFDVSYSSNQKMIQISTKIGEEISEDLSDISIVETAIKTEQGSTMLTLVGPKRVDYSQANQLINLIVEIINGDDHKNE</sequence>